<gene>
    <name type="ordered locus">Rv1546</name>
    <name type="ORF">MTCY48.19c</name>
</gene>
<keyword id="KW-0002">3D-structure</keyword>
<keyword id="KW-1185">Reference proteome</keyword>
<sequence>MASVELSADVPISPQDTWDHVSELSELGEWLVIHEGWRSELPDQLGEGVQIVGVARAMGMRNRVTWRVTKWDPPHEVAMTGSGKGGTKYGVTLTVRPTKGGSALGLRLELGGRALFGPLGSAAARAVKGDVEKSLKQFAELYG</sequence>
<dbReference type="EMBL" id="AL123456">
    <property type="protein sequence ID" value="CCP44310.1"/>
    <property type="molecule type" value="Genomic_DNA"/>
</dbReference>
<dbReference type="PIR" id="G70761">
    <property type="entry name" value="G70761"/>
</dbReference>
<dbReference type="RefSeq" id="NP_216062.1">
    <property type="nucleotide sequence ID" value="NC_000962.3"/>
</dbReference>
<dbReference type="RefSeq" id="WP_003407748.1">
    <property type="nucleotide sequence ID" value="NZ_NVQJ01000004.1"/>
</dbReference>
<dbReference type="PDB" id="8H0H">
    <property type="method" value="X-ray"/>
    <property type="resolution" value="2.74 A"/>
    <property type="chains" value="A/B/C/D=1-143"/>
</dbReference>
<dbReference type="PDB" id="8H2D">
    <property type="method" value="X-ray"/>
    <property type="resolution" value="2.90 A"/>
    <property type="chains" value="A/B=1-142"/>
</dbReference>
<dbReference type="PDBsum" id="8H0H"/>
<dbReference type="PDBsum" id="8H2D"/>
<dbReference type="SMR" id="P9WLU7"/>
<dbReference type="STRING" id="83332.Rv1546"/>
<dbReference type="PaxDb" id="83332-Rv1546"/>
<dbReference type="DNASU" id="886394"/>
<dbReference type="GeneID" id="886394"/>
<dbReference type="KEGG" id="mtu:Rv1546"/>
<dbReference type="KEGG" id="mtv:RVBD_1546"/>
<dbReference type="TubercuList" id="Rv1546"/>
<dbReference type="eggNOG" id="COG3427">
    <property type="taxonomic scope" value="Bacteria"/>
</dbReference>
<dbReference type="InParanoid" id="P9WLU7"/>
<dbReference type="OrthoDB" id="3681637at2"/>
<dbReference type="Proteomes" id="UP000001584">
    <property type="component" value="Chromosome"/>
</dbReference>
<dbReference type="GO" id="GO:0005886">
    <property type="term" value="C:plasma membrane"/>
    <property type="evidence" value="ECO:0007005"/>
    <property type="project" value="MTBBASE"/>
</dbReference>
<dbReference type="CDD" id="cd07812">
    <property type="entry name" value="SRPBCC"/>
    <property type="match status" value="1"/>
</dbReference>
<dbReference type="Gene3D" id="3.30.530.20">
    <property type="match status" value="1"/>
</dbReference>
<dbReference type="InterPro" id="IPR019587">
    <property type="entry name" value="Polyketide_cyclase/dehydratase"/>
</dbReference>
<dbReference type="InterPro" id="IPR023393">
    <property type="entry name" value="START-like_dom_sf"/>
</dbReference>
<dbReference type="Pfam" id="PF10604">
    <property type="entry name" value="Polyketide_cyc2"/>
    <property type="match status" value="1"/>
</dbReference>
<dbReference type="SUPFAM" id="SSF55961">
    <property type="entry name" value="Bet v1-like"/>
    <property type="match status" value="1"/>
</dbReference>
<protein>
    <recommendedName>
        <fullName>Uncharacterized protein Rv1546</fullName>
    </recommendedName>
</protein>
<name>Y1546_MYCTU</name>
<feature type="chain" id="PRO_0000103876" description="Uncharacterized protein Rv1546">
    <location>
        <begin position="1"/>
        <end position="143"/>
    </location>
</feature>
<organism>
    <name type="scientific">Mycobacterium tuberculosis (strain ATCC 25618 / H37Rv)</name>
    <dbReference type="NCBI Taxonomy" id="83332"/>
    <lineage>
        <taxon>Bacteria</taxon>
        <taxon>Bacillati</taxon>
        <taxon>Actinomycetota</taxon>
        <taxon>Actinomycetes</taxon>
        <taxon>Mycobacteriales</taxon>
        <taxon>Mycobacteriaceae</taxon>
        <taxon>Mycobacterium</taxon>
        <taxon>Mycobacterium tuberculosis complex</taxon>
    </lineage>
</organism>
<reference key="1">
    <citation type="journal article" date="1998" name="Nature">
        <title>Deciphering the biology of Mycobacterium tuberculosis from the complete genome sequence.</title>
        <authorList>
            <person name="Cole S.T."/>
            <person name="Brosch R."/>
            <person name="Parkhill J."/>
            <person name="Garnier T."/>
            <person name="Churcher C.M."/>
            <person name="Harris D.E."/>
            <person name="Gordon S.V."/>
            <person name="Eiglmeier K."/>
            <person name="Gas S."/>
            <person name="Barry C.E. III"/>
            <person name="Tekaia F."/>
            <person name="Badcock K."/>
            <person name="Basham D."/>
            <person name="Brown D."/>
            <person name="Chillingworth T."/>
            <person name="Connor R."/>
            <person name="Davies R.M."/>
            <person name="Devlin K."/>
            <person name="Feltwell T."/>
            <person name="Gentles S."/>
            <person name="Hamlin N."/>
            <person name="Holroyd S."/>
            <person name="Hornsby T."/>
            <person name="Jagels K."/>
            <person name="Krogh A."/>
            <person name="McLean J."/>
            <person name="Moule S."/>
            <person name="Murphy L.D."/>
            <person name="Oliver S."/>
            <person name="Osborne J."/>
            <person name="Quail M.A."/>
            <person name="Rajandream M.A."/>
            <person name="Rogers J."/>
            <person name="Rutter S."/>
            <person name="Seeger K."/>
            <person name="Skelton S."/>
            <person name="Squares S."/>
            <person name="Squares R."/>
            <person name="Sulston J.E."/>
            <person name="Taylor K."/>
            <person name="Whitehead S."/>
            <person name="Barrell B.G."/>
        </authorList>
    </citation>
    <scope>NUCLEOTIDE SEQUENCE [LARGE SCALE GENOMIC DNA]</scope>
    <source>
        <strain>ATCC 25618 / H37Rv</strain>
    </source>
</reference>
<reference key="2">
    <citation type="journal article" date="2011" name="Mol. Cell. Proteomics">
        <title>Proteogenomic analysis of Mycobacterium tuberculosis by high resolution mass spectrometry.</title>
        <authorList>
            <person name="Kelkar D.S."/>
            <person name="Kumar D."/>
            <person name="Kumar P."/>
            <person name="Balakrishnan L."/>
            <person name="Muthusamy B."/>
            <person name="Yadav A.K."/>
            <person name="Shrivastava P."/>
            <person name="Marimuthu A."/>
            <person name="Anand S."/>
            <person name="Sundaram H."/>
            <person name="Kingsbury R."/>
            <person name="Harsha H.C."/>
            <person name="Nair B."/>
            <person name="Prasad T.S."/>
            <person name="Chauhan D.S."/>
            <person name="Katoch K."/>
            <person name="Katoch V.M."/>
            <person name="Kumar P."/>
            <person name="Chaerkady R."/>
            <person name="Ramachandran S."/>
            <person name="Dash D."/>
            <person name="Pandey A."/>
        </authorList>
    </citation>
    <scope>IDENTIFICATION BY MASS SPECTROMETRY [LARGE SCALE ANALYSIS]</scope>
    <source>
        <strain>ATCC 25618 / H37Rv</strain>
    </source>
</reference>
<proteinExistence type="evidence at protein level"/>
<accession>P9WLU7</accession>
<accession>L0T8K8</accession>
<accession>P64873</accession>
<accession>Q10780</accession>